<sequence>MDPRQACLDCLAQEPPALFEAALWIAAEHLPAYSPAHALRELDELVRQIGASLDDRASASERAQGLLRRMSEQGFCEDDDFPLQPRSALLPLVLQRRQGQPLSLALVAMELARRLDIPLVGVNFPGRFLLRVPQADHLLDPATGRRLYTPDCRELLLRLQGPKSELQAAYLKQASPGEILQRLSRNLRQLHSAAGEPLAALKDAQRVIELGPVGAADHEARAGLYRQLDCPQAERYDLERALLLSDDPTEQLRLGQRLGELAPPTSRALH</sequence>
<gene>
    <name type="ordered locus">PA3419</name>
</gene>
<feature type="chain" id="PRO_0000202386" description="UPF0162 protein PA3419">
    <location>
        <begin position="1"/>
        <end position="270"/>
    </location>
</feature>
<dbReference type="EMBL" id="AE004091">
    <property type="protein sequence ID" value="AAG06807.1"/>
    <property type="molecule type" value="Genomic_DNA"/>
</dbReference>
<dbReference type="PIR" id="G83217">
    <property type="entry name" value="G83217"/>
</dbReference>
<dbReference type="RefSeq" id="NP_252109.1">
    <property type="nucleotide sequence ID" value="NC_002516.2"/>
</dbReference>
<dbReference type="RefSeq" id="WP_003106976.1">
    <property type="nucleotide sequence ID" value="NZ_QZGE01000017.1"/>
</dbReference>
<dbReference type="SMR" id="Q9HYI6"/>
<dbReference type="FunCoup" id="Q9HYI6">
    <property type="interactions" value="16"/>
</dbReference>
<dbReference type="STRING" id="208964.PA3419"/>
<dbReference type="PaxDb" id="208964-PA3419"/>
<dbReference type="GeneID" id="878744"/>
<dbReference type="KEGG" id="pae:PA3419"/>
<dbReference type="PATRIC" id="fig|208964.12.peg.3580"/>
<dbReference type="PseudoCAP" id="PA3419"/>
<dbReference type="HOGENOM" id="CLU_063810_1_0_6"/>
<dbReference type="InParanoid" id="Q9HYI6"/>
<dbReference type="OrthoDB" id="232498at2"/>
<dbReference type="PhylomeDB" id="Q9HYI6"/>
<dbReference type="BioCyc" id="PAER208964:G1FZ6-3486-MONOMER"/>
<dbReference type="Proteomes" id="UP000002438">
    <property type="component" value="Chromosome"/>
</dbReference>
<dbReference type="InterPro" id="IPR032698">
    <property type="entry name" value="SirB1_N"/>
</dbReference>
<dbReference type="PANTHER" id="PTHR31350:SF21">
    <property type="entry name" value="F-BOX ONLY PROTEIN 21"/>
    <property type="match status" value="1"/>
</dbReference>
<dbReference type="PANTHER" id="PTHR31350">
    <property type="entry name" value="SI:DKEY-261L7.2"/>
    <property type="match status" value="1"/>
</dbReference>
<dbReference type="Pfam" id="PF13369">
    <property type="entry name" value="Transglut_core2"/>
    <property type="match status" value="1"/>
</dbReference>
<evidence type="ECO:0000305" key="1"/>
<proteinExistence type="inferred from homology"/>
<protein>
    <recommendedName>
        <fullName>UPF0162 protein PA3419</fullName>
    </recommendedName>
</protein>
<accession>Q9HYI6</accession>
<comment type="similarity">
    <text evidence="1">Belongs to the UPF0162 family.</text>
</comment>
<organism>
    <name type="scientific">Pseudomonas aeruginosa (strain ATCC 15692 / DSM 22644 / CIP 104116 / JCM 14847 / LMG 12228 / 1C / PRS 101 / PAO1)</name>
    <dbReference type="NCBI Taxonomy" id="208964"/>
    <lineage>
        <taxon>Bacteria</taxon>
        <taxon>Pseudomonadati</taxon>
        <taxon>Pseudomonadota</taxon>
        <taxon>Gammaproteobacteria</taxon>
        <taxon>Pseudomonadales</taxon>
        <taxon>Pseudomonadaceae</taxon>
        <taxon>Pseudomonas</taxon>
    </lineage>
</organism>
<keyword id="KW-1185">Reference proteome</keyword>
<name>Y3419_PSEAE</name>
<reference key="1">
    <citation type="journal article" date="2000" name="Nature">
        <title>Complete genome sequence of Pseudomonas aeruginosa PAO1, an opportunistic pathogen.</title>
        <authorList>
            <person name="Stover C.K."/>
            <person name="Pham X.-Q.T."/>
            <person name="Erwin A.L."/>
            <person name="Mizoguchi S.D."/>
            <person name="Warrener P."/>
            <person name="Hickey M.J."/>
            <person name="Brinkman F.S.L."/>
            <person name="Hufnagle W.O."/>
            <person name="Kowalik D.J."/>
            <person name="Lagrou M."/>
            <person name="Garber R.L."/>
            <person name="Goltry L."/>
            <person name="Tolentino E."/>
            <person name="Westbrock-Wadman S."/>
            <person name="Yuan Y."/>
            <person name="Brody L.L."/>
            <person name="Coulter S.N."/>
            <person name="Folger K.R."/>
            <person name="Kas A."/>
            <person name="Larbig K."/>
            <person name="Lim R.M."/>
            <person name="Smith K.A."/>
            <person name="Spencer D.H."/>
            <person name="Wong G.K.-S."/>
            <person name="Wu Z."/>
            <person name="Paulsen I.T."/>
            <person name="Reizer J."/>
            <person name="Saier M.H. Jr."/>
            <person name="Hancock R.E.W."/>
            <person name="Lory S."/>
            <person name="Olson M.V."/>
        </authorList>
    </citation>
    <scope>NUCLEOTIDE SEQUENCE [LARGE SCALE GENOMIC DNA]</scope>
    <source>
        <strain>ATCC 15692 / DSM 22644 / CIP 104116 / JCM 14847 / LMG 12228 / 1C / PRS 101 / PAO1</strain>
    </source>
</reference>